<evidence type="ECO:0000250" key="1"/>
<evidence type="ECO:0000250" key="2">
    <source>
        <dbReference type="UniProtKB" id="P04746"/>
    </source>
</evidence>
<evidence type="ECO:0000250" key="3">
    <source>
        <dbReference type="UniProtKB" id="P56634"/>
    </source>
</evidence>
<evidence type="ECO:0000255" key="4"/>
<evidence type="ECO:0000305" key="5"/>
<protein>
    <recommendedName>
        <fullName>Alpha-amylase-related protein</fullName>
        <ecNumber evidence="2">3.2.1.1</ecNumber>
    </recommendedName>
</protein>
<comment type="catalytic activity">
    <reaction evidence="2">
        <text>Endohydrolysis of (1-&gt;4)-alpha-D-glucosidic linkages in polysaccharides containing three or more (1-&gt;4)-alpha-linked D-glucose units.</text>
        <dbReference type="EC" id="3.2.1.1"/>
    </reaction>
</comment>
<comment type="cofactor">
    <cofactor evidence="3">
        <name>Ca(2+)</name>
        <dbReference type="ChEBI" id="CHEBI:29108"/>
    </cofactor>
    <text evidence="3">Binds 1 Ca(2+) ion per subunit.</text>
</comment>
<comment type="cofactor">
    <cofactor evidence="3">
        <name>chloride</name>
        <dbReference type="ChEBI" id="CHEBI:17996"/>
    </cofactor>
    <text evidence="3">Binds 1 Cl(-) ion per subunit.</text>
</comment>
<comment type="subunit">
    <text evidence="1">Monomer.</text>
</comment>
<comment type="subcellular location">
    <subcellularLocation>
        <location evidence="5">Secreted</location>
    </subcellularLocation>
</comment>
<comment type="similarity">
    <text evidence="5">Belongs to the glycosyl hydrolase 13 family.</text>
</comment>
<accession>O77013</accession>
<keyword id="KW-0106">Calcium</keyword>
<keyword id="KW-0119">Carbohydrate metabolism</keyword>
<keyword id="KW-0868">Chloride</keyword>
<keyword id="KW-1015">Disulfide bond</keyword>
<keyword id="KW-0326">Glycosidase</keyword>
<keyword id="KW-0378">Hydrolase</keyword>
<keyword id="KW-0479">Metal-binding</keyword>
<keyword id="KW-0873">Pyrrolidone carboxylic acid</keyword>
<keyword id="KW-1185">Reference proteome</keyword>
<keyword id="KW-0964">Secreted</keyword>
<keyword id="KW-0732">Signal</keyword>
<dbReference type="EC" id="3.2.1.1" evidence="2"/>
<dbReference type="EMBL" id="U96156">
    <property type="protein sequence ID" value="AAC39106.3"/>
    <property type="molecule type" value="Genomic_DNA"/>
</dbReference>
<dbReference type="SMR" id="O77013"/>
<dbReference type="CAZy" id="GH13">
    <property type="family name" value="Glycoside Hydrolase Family 13"/>
</dbReference>
<dbReference type="OrthoDB" id="550577at2759"/>
<dbReference type="Proteomes" id="UP000515200">
    <property type="component" value="Unplaced"/>
</dbReference>
<dbReference type="GO" id="GO:0005576">
    <property type="term" value="C:extracellular region"/>
    <property type="evidence" value="ECO:0007669"/>
    <property type="project" value="UniProtKB-SubCell"/>
</dbReference>
<dbReference type="GO" id="GO:0004556">
    <property type="term" value="F:alpha-amylase activity"/>
    <property type="evidence" value="ECO:0007669"/>
    <property type="project" value="UniProtKB-EC"/>
</dbReference>
<dbReference type="GO" id="GO:0046872">
    <property type="term" value="F:metal ion binding"/>
    <property type="evidence" value="ECO:0007669"/>
    <property type="project" value="UniProtKB-KW"/>
</dbReference>
<dbReference type="GO" id="GO:0005975">
    <property type="term" value="P:carbohydrate metabolic process"/>
    <property type="evidence" value="ECO:0007669"/>
    <property type="project" value="InterPro"/>
</dbReference>
<dbReference type="CDD" id="cd11317">
    <property type="entry name" value="AmyAc_bac_euk_AmyA"/>
    <property type="match status" value="1"/>
</dbReference>
<dbReference type="FunFam" id="3.20.20.80:FF:000119">
    <property type="entry name" value="Alpha-amylase-related protein"/>
    <property type="match status" value="1"/>
</dbReference>
<dbReference type="FunFam" id="2.60.40.1180:FF:000020">
    <property type="entry name" value="Pancreatic alpha-amylase"/>
    <property type="match status" value="1"/>
</dbReference>
<dbReference type="Gene3D" id="3.20.20.80">
    <property type="entry name" value="Glycosidases"/>
    <property type="match status" value="1"/>
</dbReference>
<dbReference type="Gene3D" id="2.60.40.1180">
    <property type="entry name" value="Golgi alpha-mannosidase II"/>
    <property type="match status" value="1"/>
</dbReference>
<dbReference type="InterPro" id="IPR006048">
    <property type="entry name" value="A-amylase/branching_C"/>
</dbReference>
<dbReference type="InterPro" id="IPR031319">
    <property type="entry name" value="A-amylase_C"/>
</dbReference>
<dbReference type="InterPro" id="IPR006046">
    <property type="entry name" value="Alpha_amylase"/>
</dbReference>
<dbReference type="InterPro" id="IPR006047">
    <property type="entry name" value="Glyco_hydro_13_cat_dom"/>
</dbReference>
<dbReference type="InterPro" id="IPR013780">
    <property type="entry name" value="Glyco_hydro_b"/>
</dbReference>
<dbReference type="InterPro" id="IPR017853">
    <property type="entry name" value="Glycoside_hydrolase_SF"/>
</dbReference>
<dbReference type="PANTHER" id="PTHR43447">
    <property type="entry name" value="ALPHA-AMYLASE"/>
    <property type="match status" value="1"/>
</dbReference>
<dbReference type="Pfam" id="PF00128">
    <property type="entry name" value="Alpha-amylase"/>
    <property type="match status" value="1"/>
</dbReference>
<dbReference type="Pfam" id="PF02806">
    <property type="entry name" value="Alpha-amylase_C"/>
    <property type="match status" value="1"/>
</dbReference>
<dbReference type="PRINTS" id="PR00110">
    <property type="entry name" value="ALPHAAMYLASE"/>
</dbReference>
<dbReference type="SMART" id="SM00642">
    <property type="entry name" value="Aamy"/>
    <property type="match status" value="1"/>
</dbReference>
<dbReference type="SMART" id="SM00632">
    <property type="entry name" value="Aamy_C"/>
    <property type="match status" value="1"/>
</dbReference>
<dbReference type="SUPFAM" id="SSF51445">
    <property type="entry name" value="(Trans)glycosidases"/>
    <property type="match status" value="1"/>
</dbReference>
<dbReference type="SUPFAM" id="SSF51011">
    <property type="entry name" value="Glycosyl hydrolase domain"/>
    <property type="match status" value="1"/>
</dbReference>
<organism>
    <name type="scientific">Drosophila kikkawai</name>
    <name type="common">Fruit fly</name>
    <dbReference type="NCBI Taxonomy" id="30033"/>
    <lineage>
        <taxon>Eukaryota</taxon>
        <taxon>Metazoa</taxon>
        <taxon>Ecdysozoa</taxon>
        <taxon>Arthropoda</taxon>
        <taxon>Hexapoda</taxon>
        <taxon>Insecta</taxon>
        <taxon>Pterygota</taxon>
        <taxon>Neoptera</taxon>
        <taxon>Endopterygota</taxon>
        <taxon>Diptera</taxon>
        <taxon>Brachycera</taxon>
        <taxon>Muscomorpha</taxon>
        <taxon>Ephydroidea</taxon>
        <taxon>Drosophilidae</taxon>
        <taxon>Drosophila</taxon>
        <taxon>Sophophora</taxon>
    </lineage>
</organism>
<reference key="1">
    <citation type="submission" date="2001-12" db="EMBL/GenBank/DDBJ databases">
        <authorList>
            <person name="Da Lage J.-L."/>
        </authorList>
    </citation>
    <scope>NUCLEOTIDE SEQUENCE [GENOMIC DNA]</scope>
</reference>
<proteinExistence type="inferred from homology"/>
<sequence>MIKFALALTLCLAGASLSLAQHNPQWWGNRNTIVHLFEWKWSDIAEECETFLAPRGFAGVQVSPVNENIISAGRPWWERYQPISYKLTTRSGNEEEFADMVRRCNDVGIRIYVDVLLNHMSGDFDGVAVGTAGTEAEPSKKSFPGVPYSAQDFHPSCEITDWNDRFQVQQCELVGLKDLNQHSDYVRSKLIEFLDHLIELGVAGFRVDAAKHMAAEDLEYIYGSLSNLNIEHGFPHNARPFIFQEVIDHGHETVSREEYNGLGAVTEFRFSEEIGNAFRGNNALKWLQSWGTDWGFLSSEQALTFVDNHDNQRDMGSVLNYKSPRQYKMATAFHLAYPYGISRVMSSFAFDDHDTPPPQDAQENIISPEFDDDGACVNGWICEHRWRQIYAMVGFKNAVRDTQLSEWWDNGDNQISFCRGNKGFLAVNNNQYDLSQELNTCLPAGEYCDVISGSLIDGACTGKSVTVNEHGYGYIHIGSDDFDGVLALHVNAKV</sequence>
<feature type="signal peptide" evidence="1">
    <location>
        <begin position="1"/>
        <end position="20"/>
    </location>
</feature>
<feature type="chain" id="PRO_0000001379" description="Alpha-amylase-related protein">
    <location>
        <begin position="21"/>
        <end position="494"/>
    </location>
</feature>
<feature type="active site" description="Nucleophile" evidence="2">
    <location>
        <position position="208"/>
    </location>
</feature>
<feature type="active site" description="Proton donor" evidence="2">
    <location>
        <position position="245"/>
    </location>
</feature>
<feature type="binding site" evidence="3">
    <location>
        <position position="118"/>
    </location>
    <ligand>
        <name>Ca(2+)</name>
        <dbReference type="ChEBI" id="CHEBI:29108"/>
    </ligand>
</feature>
<feature type="binding site" evidence="3">
    <location>
        <position position="169"/>
    </location>
    <ligand>
        <name>Ca(2+)</name>
        <dbReference type="ChEBI" id="CHEBI:29108"/>
    </ligand>
</feature>
<feature type="binding site" evidence="3">
    <location>
        <position position="178"/>
    </location>
    <ligand>
        <name>Ca(2+)</name>
        <dbReference type="ChEBI" id="CHEBI:29108"/>
    </ligand>
</feature>
<feature type="binding site" evidence="3">
    <location>
        <position position="206"/>
    </location>
    <ligand>
        <name>chloride</name>
        <dbReference type="ChEBI" id="CHEBI:17996"/>
    </ligand>
</feature>
<feature type="binding site" evidence="3">
    <location>
        <position position="212"/>
    </location>
    <ligand>
        <name>Ca(2+)</name>
        <dbReference type="ChEBI" id="CHEBI:29108"/>
    </ligand>
</feature>
<feature type="binding site" evidence="3">
    <location>
        <position position="308"/>
    </location>
    <ligand>
        <name>chloride</name>
        <dbReference type="ChEBI" id="CHEBI:17996"/>
    </ligand>
</feature>
<feature type="binding site" evidence="3">
    <location>
        <position position="343"/>
    </location>
    <ligand>
        <name>chloride</name>
        <dbReference type="ChEBI" id="CHEBI:17996"/>
    </ligand>
</feature>
<feature type="site" description="Transition state stabilizer" evidence="2">
    <location>
        <position position="310"/>
    </location>
</feature>
<feature type="modified residue" description="Pyrrolidone carboxylic acid" evidence="1">
    <location>
        <position position="21"/>
    </location>
</feature>
<feature type="disulfide bond" evidence="3">
    <location>
        <begin position="48"/>
        <end position="104"/>
    </location>
</feature>
<feature type="disulfide bond" evidence="3">
    <location>
        <begin position="157"/>
        <end position="171"/>
    </location>
</feature>
<feature type="disulfide bond" evidence="3">
    <location>
        <begin position="376"/>
        <end position="382"/>
    </location>
</feature>
<feature type="disulfide bond" evidence="4">
    <location>
        <begin position="418"/>
        <end position="441"/>
    </location>
</feature>
<feature type="disulfide bond" evidence="3">
    <location>
        <begin position="448"/>
        <end position="460"/>
    </location>
</feature>
<gene>
    <name type="primary">Amyrel</name>
</gene>
<name>AMYR_DROKI</name>